<keyword id="KW-0150">Chloroplast</keyword>
<keyword id="KW-0472">Membrane</keyword>
<keyword id="KW-0520">NAD</keyword>
<keyword id="KW-0521">NADP</keyword>
<keyword id="KW-0934">Plastid</keyword>
<keyword id="KW-0618">Plastoquinone</keyword>
<keyword id="KW-0874">Quinone</keyword>
<keyword id="KW-0793">Thylakoid</keyword>
<keyword id="KW-1278">Translocase</keyword>
<keyword id="KW-0813">Transport</keyword>
<dbReference type="EC" id="7.1.1.-" evidence="1"/>
<dbReference type="EMBL" id="AE009947">
    <property type="protein sequence ID" value="AAT44696.1"/>
    <property type="molecule type" value="Genomic_DNA"/>
</dbReference>
<dbReference type="SMR" id="Q6L396"/>
<dbReference type="GO" id="GO:0009535">
    <property type="term" value="C:chloroplast thylakoid membrane"/>
    <property type="evidence" value="ECO:0007669"/>
    <property type="project" value="UniProtKB-SubCell"/>
</dbReference>
<dbReference type="GO" id="GO:0008137">
    <property type="term" value="F:NADH dehydrogenase (ubiquinone) activity"/>
    <property type="evidence" value="ECO:0007669"/>
    <property type="project" value="InterPro"/>
</dbReference>
<dbReference type="GO" id="GO:0048038">
    <property type="term" value="F:quinone binding"/>
    <property type="evidence" value="ECO:0007669"/>
    <property type="project" value="UniProtKB-KW"/>
</dbReference>
<dbReference type="GO" id="GO:0019684">
    <property type="term" value="P:photosynthesis, light reaction"/>
    <property type="evidence" value="ECO:0007669"/>
    <property type="project" value="UniProtKB-UniRule"/>
</dbReference>
<dbReference type="Gene3D" id="3.30.460.80">
    <property type="entry name" value="NADH:ubiquinone oxidoreductase, 30kDa subunit"/>
    <property type="match status" value="1"/>
</dbReference>
<dbReference type="HAMAP" id="MF_01357">
    <property type="entry name" value="NDH1_NuoC"/>
    <property type="match status" value="1"/>
</dbReference>
<dbReference type="InterPro" id="IPR010218">
    <property type="entry name" value="NADH_DH_suC"/>
</dbReference>
<dbReference type="InterPro" id="IPR037232">
    <property type="entry name" value="NADH_quin_OxRdtase_su_C/D-like"/>
</dbReference>
<dbReference type="InterPro" id="IPR001268">
    <property type="entry name" value="NADH_UbQ_OxRdtase_30kDa_su"/>
</dbReference>
<dbReference type="InterPro" id="IPR020396">
    <property type="entry name" value="NADH_UbQ_OxRdtase_CS"/>
</dbReference>
<dbReference type="NCBIfam" id="NF009141">
    <property type="entry name" value="PRK12494.1"/>
    <property type="match status" value="1"/>
</dbReference>
<dbReference type="PANTHER" id="PTHR10884:SF14">
    <property type="entry name" value="NADH DEHYDROGENASE [UBIQUINONE] IRON-SULFUR PROTEIN 3, MITOCHONDRIAL"/>
    <property type="match status" value="1"/>
</dbReference>
<dbReference type="PANTHER" id="PTHR10884">
    <property type="entry name" value="NADH DEHYDROGENASE UBIQUINONE IRON-SULFUR PROTEIN 3"/>
    <property type="match status" value="1"/>
</dbReference>
<dbReference type="Pfam" id="PF00329">
    <property type="entry name" value="Complex1_30kDa"/>
    <property type="match status" value="1"/>
</dbReference>
<dbReference type="SUPFAM" id="SSF143243">
    <property type="entry name" value="Nqo5-like"/>
    <property type="match status" value="1"/>
</dbReference>
<dbReference type="PROSITE" id="PS00542">
    <property type="entry name" value="COMPLEX1_30K"/>
    <property type="match status" value="1"/>
</dbReference>
<geneLocation type="chloroplast"/>
<sequence length="159" mass="18669">MQQGWLSNWLVKHDVVHRSLGFDHRGVETLQIKAGDWDSIAVILYVYGYNYLRSQCAYDVAPGGSLASVYHLTRIQYGIDNPEEVCIKVFAQKDNPRIPSVFWVWRSADFQERESYDMVGISYDNHPRLKRILMPESWIGWPLRKDYITPNFYEIQDAH</sequence>
<organism>
    <name type="scientific">Saccharum hybrid</name>
    <name type="common">Sugarcane</name>
    <dbReference type="NCBI Taxonomy" id="15819"/>
    <lineage>
        <taxon>Eukaryota</taxon>
        <taxon>Viridiplantae</taxon>
        <taxon>Streptophyta</taxon>
        <taxon>Embryophyta</taxon>
        <taxon>Tracheophyta</taxon>
        <taxon>Spermatophyta</taxon>
        <taxon>Magnoliopsida</taxon>
        <taxon>Liliopsida</taxon>
        <taxon>Poales</taxon>
        <taxon>Poaceae</taxon>
        <taxon>PACMAD clade</taxon>
        <taxon>Panicoideae</taxon>
        <taxon>Andropogonodae</taxon>
        <taxon>Andropogoneae</taxon>
        <taxon>Saccharinae</taxon>
        <taxon>Saccharum</taxon>
    </lineage>
</organism>
<gene>
    <name evidence="1" type="primary">ndhJ</name>
    <name type="ordered locus">PS124</name>
</gene>
<protein>
    <recommendedName>
        <fullName evidence="1">NAD(P)H-quinone oxidoreductase subunit J, chloroplastic</fullName>
        <ecNumber evidence="1">7.1.1.-</ecNumber>
    </recommendedName>
    <alternativeName>
        <fullName>NAD(P)H dehydrogenase subunit J</fullName>
    </alternativeName>
    <alternativeName>
        <fullName evidence="1">NADH-plastoquinone oxidoreductase subunit J</fullName>
    </alternativeName>
</protein>
<name>NDHJ_SACHY</name>
<proteinExistence type="inferred from homology"/>
<reference key="1">
    <citation type="journal article" date="2004" name="Curr. Genet.">
        <title>Structural features and transcript-editing analysis of sugarcane (Saccharum officinarum L.) chloroplast genome.</title>
        <authorList>
            <person name="Calsa T. Jr."/>
            <person name="Carraro D.M."/>
            <person name="Benatti M.R."/>
            <person name="Barbosa A.C."/>
            <person name="Kitajima J.P."/>
            <person name="Carrer H."/>
        </authorList>
    </citation>
    <scope>NUCLEOTIDE SEQUENCE [LARGE SCALE GENOMIC DNA]</scope>
    <source>
        <strain>cv. SP-80-3280</strain>
    </source>
</reference>
<accession>Q6L396</accession>
<comment type="function">
    <text evidence="1">NDH shuttles electrons from NAD(P)H:plastoquinone, via FMN and iron-sulfur (Fe-S) centers, to quinones in the photosynthetic chain and possibly in a chloroplast respiratory chain. The immediate electron acceptor for the enzyme in this species is believed to be plastoquinone. Couples the redox reaction to proton translocation, and thus conserves the redox energy in a proton gradient.</text>
</comment>
<comment type="catalytic activity">
    <reaction evidence="1">
        <text>a plastoquinone + NADH + (n+1) H(+)(in) = a plastoquinol + NAD(+) + n H(+)(out)</text>
        <dbReference type="Rhea" id="RHEA:42608"/>
        <dbReference type="Rhea" id="RHEA-COMP:9561"/>
        <dbReference type="Rhea" id="RHEA-COMP:9562"/>
        <dbReference type="ChEBI" id="CHEBI:15378"/>
        <dbReference type="ChEBI" id="CHEBI:17757"/>
        <dbReference type="ChEBI" id="CHEBI:57540"/>
        <dbReference type="ChEBI" id="CHEBI:57945"/>
        <dbReference type="ChEBI" id="CHEBI:62192"/>
    </reaction>
</comment>
<comment type="catalytic activity">
    <reaction evidence="1">
        <text>a plastoquinone + NADPH + (n+1) H(+)(in) = a plastoquinol + NADP(+) + n H(+)(out)</text>
        <dbReference type="Rhea" id="RHEA:42612"/>
        <dbReference type="Rhea" id="RHEA-COMP:9561"/>
        <dbReference type="Rhea" id="RHEA-COMP:9562"/>
        <dbReference type="ChEBI" id="CHEBI:15378"/>
        <dbReference type="ChEBI" id="CHEBI:17757"/>
        <dbReference type="ChEBI" id="CHEBI:57783"/>
        <dbReference type="ChEBI" id="CHEBI:58349"/>
        <dbReference type="ChEBI" id="CHEBI:62192"/>
    </reaction>
</comment>
<comment type="subunit">
    <text evidence="1">NDH is composed of at least 16 different subunits, 5 of which are encoded in the nucleus.</text>
</comment>
<comment type="subcellular location">
    <subcellularLocation>
        <location evidence="1">Plastid</location>
        <location evidence="1">Chloroplast thylakoid membrane</location>
        <topology evidence="1">Peripheral membrane protein</topology>
        <orientation evidence="1">Stromal side</orientation>
    </subcellularLocation>
</comment>
<comment type="similarity">
    <text evidence="1">Belongs to the complex I 30 kDa subunit family.</text>
</comment>
<feature type="chain" id="PRO_0000226914" description="NAD(P)H-quinone oxidoreductase subunit J, chloroplastic">
    <location>
        <begin position="1"/>
        <end position="159"/>
    </location>
</feature>
<evidence type="ECO:0000255" key="1">
    <source>
        <dbReference type="HAMAP-Rule" id="MF_01357"/>
    </source>
</evidence>